<accession>A7X395</accession>
<protein>
    <recommendedName>
        <fullName evidence="1">Probable GTP-binding protein EngB</fullName>
    </recommendedName>
</protein>
<keyword id="KW-0131">Cell cycle</keyword>
<keyword id="KW-0132">Cell division</keyword>
<keyword id="KW-0342">GTP-binding</keyword>
<keyword id="KW-0460">Magnesium</keyword>
<keyword id="KW-0479">Metal-binding</keyword>
<keyword id="KW-0547">Nucleotide-binding</keyword>
<keyword id="KW-0717">Septation</keyword>
<organism>
    <name type="scientific">Staphylococcus aureus (strain Mu3 / ATCC 700698)</name>
    <dbReference type="NCBI Taxonomy" id="418127"/>
    <lineage>
        <taxon>Bacteria</taxon>
        <taxon>Bacillati</taxon>
        <taxon>Bacillota</taxon>
        <taxon>Bacilli</taxon>
        <taxon>Bacillales</taxon>
        <taxon>Staphylococcaceae</taxon>
        <taxon>Staphylococcus</taxon>
    </lineage>
</organism>
<reference key="1">
    <citation type="journal article" date="2008" name="Antimicrob. Agents Chemother.">
        <title>Mutated response regulator graR is responsible for phenotypic conversion of Staphylococcus aureus from heterogeneous vancomycin-intermediate resistance to vancomycin-intermediate resistance.</title>
        <authorList>
            <person name="Neoh H.-M."/>
            <person name="Cui L."/>
            <person name="Yuzawa H."/>
            <person name="Takeuchi F."/>
            <person name="Matsuo M."/>
            <person name="Hiramatsu K."/>
        </authorList>
    </citation>
    <scope>NUCLEOTIDE SEQUENCE [LARGE SCALE GENOMIC DNA]</scope>
    <source>
        <strain>Mu3 / ATCC 700698</strain>
    </source>
</reference>
<evidence type="ECO:0000255" key="1">
    <source>
        <dbReference type="HAMAP-Rule" id="MF_00321"/>
    </source>
</evidence>
<name>ENGB_STAA1</name>
<dbReference type="EMBL" id="AP009324">
    <property type="protein sequence ID" value="BAF78543.1"/>
    <property type="molecule type" value="Genomic_DNA"/>
</dbReference>
<dbReference type="SMR" id="A7X395"/>
<dbReference type="KEGG" id="saw:SAHV_1660"/>
<dbReference type="HOGENOM" id="CLU_033732_3_0_9"/>
<dbReference type="GO" id="GO:0005829">
    <property type="term" value="C:cytosol"/>
    <property type="evidence" value="ECO:0007669"/>
    <property type="project" value="TreeGrafter"/>
</dbReference>
<dbReference type="GO" id="GO:0005525">
    <property type="term" value="F:GTP binding"/>
    <property type="evidence" value="ECO:0007669"/>
    <property type="project" value="UniProtKB-UniRule"/>
</dbReference>
<dbReference type="GO" id="GO:0046872">
    <property type="term" value="F:metal ion binding"/>
    <property type="evidence" value="ECO:0007669"/>
    <property type="project" value="UniProtKB-KW"/>
</dbReference>
<dbReference type="GO" id="GO:0000917">
    <property type="term" value="P:division septum assembly"/>
    <property type="evidence" value="ECO:0007669"/>
    <property type="project" value="UniProtKB-KW"/>
</dbReference>
<dbReference type="CDD" id="cd01876">
    <property type="entry name" value="YihA_EngB"/>
    <property type="match status" value="1"/>
</dbReference>
<dbReference type="FunFam" id="3.40.50.300:FF:000098">
    <property type="entry name" value="Probable GTP-binding protein EngB"/>
    <property type="match status" value="1"/>
</dbReference>
<dbReference type="Gene3D" id="3.40.50.300">
    <property type="entry name" value="P-loop containing nucleotide triphosphate hydrolases"/>
    <property type="match status" value="1"/>
</dbReference>
<dbReference type="HAMAP" id="MF_00321">
    <property type="entry name" value="GTPase_EngB"/>
    <property type="match status" value="1"/>
</dbReference>
<dbReference type="InterPro" id="IPR030393">
    <property type="entry name" value="G_ENGB_dom"/>
</dbReference>
<dbReference type="InterPro" id="IPR006073">
    <property type="entry name" value="GTP-bd"/>
</dbReference>
<dbReference type="InterPro" id="IPR019987">
    <property type="entry name" value="GTP-bd_ribosome_bio_YsxC"/>
</dbReference>
<dbReference type="InterPro" id="IPR027417">
    <property type="entry name" value="P-loop_NTPase"/>
</dbReference>
<dbReference type="NCBIfam" id="TIGR03598">
    <property type="entry name" value="GTPase_YsxC"/>
    <property type="match status" value="1"/>
</dbReference>
<dbReference type="PANTHER" id="PTHR11649:SF13">
    <property type="entry name" value="ENGB-TYPE G DOMAIN-CONTAINING PROTEIN"/>
    <property type="match status" value="1"/>
</dbReference>
<dbReference type="PANTHER" id="PTHR11649">
    <property type="entry name" value="MSS1/TRME-RELATED GTP-BINDING PROTEIN"/>
    <property type="match status" value="1"/>
</dbReference>
<dbReference type="Pfam" id="PF01926">
    <property type="entry name" value="MMR_HSR1"/>
    <property type="match status" value="1"/>
</dbReference>
<dbReference type="SUPFAM" id="SSF52540">
    <property type="entry name" value="P-loop containing nucleoside triphosphate hydrolases"/>
    <property type="match status" value="1"/>
</dbReference>
<dbReference type="PROSITE" id="PS51706">
    <property type="entry name" value="G_ENGB"/>
    <property type="match status" value="1"/>
</dbReference>
<comment type="function">
    <text evidence="1">Necessary for normal cell division and for the maintenance of normal septation.</text>
</comment>
<comment type="cofactor">
    <cofactor evidence="1">
        <name>Mg(2+)</name>
        <dbReference type="ChEBI" id="CHEBI:18420"/>
    </cofactor>
</comment>
<comment type="similarity">
    <text evidence="1">Belongs to the TRAFAC class TrmE-Era-EngA-EngB-Septin-like GTPase superfamily. EngB GTPase family.</text>
</comment>
<proteinExistence type="inferred from homology"/>
<sequence>MKVNPNNIELIISAVKEEQYPETELSEVALSGRSNVGKSTFINSMIGRKNMARTSQQPGKTQTLNFYNIDEQLIFVDVPGYGYAKVSKTQREKFGKMIEEYITKRENLQLVIQLVDLRHDPTQDDILMYNYLKHFDIPTLVICTKEDKIPKGKVQKHIKNIKTQLDMDPDDTIVSYSSIQNNKQQQIWNLIEPYIS</sequence>
<gene>
    <name evidence="1" type="primary">engB</name>
    <name type="ordered locus">SAHV_1660</name>
</gene>
<feature type="chain" id="PRO_1000005860" description="Probable GTP-binding protein EngB">
    <location>
        <begin position="1"/>
        <end position="196"/>
    </location>
</feature>
<feature type="domain" description="EngB-type G" evidence="1">
    <location>
        <begin position="24"/>
        <end position="196"/>
    </location>
</feature>
<feature type="binding site" evidence="1">
    <location>
        <begin position="32"/>
        <end position="39"/>
    </location>
    <ligand>
        <name>GTP</name>
        <dbReference type="ChEBI" id="CHEBI:37565"/>
    </ligand>
</feature>
<feature type="binding site" evidence="1">
    <location>
        <position position="39"/>
    </location>
    <ligand>
        <name>Mg(2+)</name>
        <dbReference type="ChEBI" id="CHEBI:18420"/>
    </ligand>
</feature>
<feature type="binding site" evidence="1">
    <location>
        <begin position="59"/>
        <end position="63"/>
    </location>
    <ligand>
        <name>GTP</name>
        <dbReference type="ChEBI" id="CHEBI:37565"/>
    </ligand>
</feature>
<feature type="binding site" evidence="1">
    <location>
        <position position="61"/>
    </location>
    <ligand>
        <name>Mg(2+)</name>
        <dbReference type="ChEBI" id="CHEBI:18420"/>
    </ligand>
</feature>
<feature type="binding site" evidence="1">
    <location>
        <begin position="77"/>
        <end position="80"/>
    </location>
    <ligand>
        <name>GTP</name>
        <dbReference type="ChEBI" id="CHEBI:37565"/>
    </ligand>
</feature>
<feature type="binding site" evidence="1">
    <location>
        <begin position="144"/>
        <end position="147"/>
    </location>
    <ligand>
        <name>GTP</name>
        <dbReference type="ChEBI" id="CHEBI:37565"/>
    </ligand>
</feature>
<feature type="binding site" evidence="1">
    <location>
        <begin position="176"/>
        <end position="178"/>
    </location>
    <ligand>
        <name>GTP</name>
        <dbReference type="ChEBI" id="CHEBI:37565"/>
    </ligand>
</feature>